<gene>
    <name evidence="1" type="primary">fadB</name>
    <name type="ordered locus">ECED1_4548</name>
</gene>
<feature type="chain" id="PRO_1000186037" description="Fatty acid oxidation complex subunit alpha">
    <location>
        <begin position="1"/>
        <end position="729"/>
    </location>
</feature>
<feature type="region of interest" description="Enoyl-CoA hydratase/isomerase" evidence="1">
    <location>
        <begin position="1"/>
        <end position="189"/>
    </location>
</feature>
<feature type="region of interest" description="3-hydroxyacyl-CoA dehydrogenase" evidence="1">
    <location>
        <begin position="311"/>
        <end position="729"/>
    </location>
</feature>
<feature type="region of interest" description="Disordered" evidence="2">
    <location>
        <begin position="708"/>
        <end position="729"/>
    </location>
</feature>
<feature type="active site" description="For 3-hydroxyacyl-CoA dehydrogenase activity" evidence="1">
    <location>
        <position position="450"/>
    </location>
</feature>
<feature type="binding site" evidence="1">
    <location>
        <position position="296"/>
    </location>
    <ligand>
        <name>substrate</name>
    </ligand>
</feature>
<feature type="binding site" evidence="1">
    <location>
        <position position="324"/>
    </location>
    <ligand>
        <name>NAD(+)</name>
        <dbReference type="ChEBI" id="CHEBI:57540"/>
    </ligand>
</feature>
<feature type="binding site" evidence="1">
    <location>
        <position position="343"/>
    </location>
    <ligand>
        <name>NAD(+)</name>
        <dbReference type="ChEBI" id="CHEBI:57540"/>
    </ligand>
</feature>
<feature type="binding site" evidence="1">
    <location>
        <begin position="400"/>
        <end position="402"/>
    </location>
    <ligand>
        <name>NAD(+)</name>
        <dbReference type="ChEBI" id="CHEBI:57540"/>
    </ligand>
</feature>
<feature type="binding site" evidence="1">
    <location>
        <position position="407"/>
    </location>
    <ligand>
        <name>NAD(+)</name>
        <dbReference type="ChEBI" id="CHEBI:57540"/>
    </ligand>
</feature>
<feature type="binding site" evidence="1">
    <location>
        <position position="429"/>
    </location>
    <ligand>
        <name>NAD(+)</name>
        <dbReference type="ChEBI" id="CHEBI:57540"/>
    </ligand>
</feature>
<feature type="binding site" evidence="1">
    <location>
        <position position="453"/>
    </location>
    <ligand>
        <name>NAD(+)</name>
        <dbReference type="ChEBI" id="CHEBI:57540"/>
    </ligand>
</feature>
<feature type="binding site" evidence="1">
    <location>
        <position position="500"/>
    </location>
    <ligand>
        <name>substrate</name>
    </ligand>
</feature>
<feature type="binding site" evidence="1">
    <location>
        <position position="660"/>
    </location>
    <ligand>
        <name>substrate</name>
    </ligand>
</feature>
<feature type="site" description="Important for catalytic activity" evidence="1">
    <location>
        <position position="119"/>
    </location>
</feature>
<feature type="site" description="Important for catalytic activity" evidence="1">
    <location>
        <position position="139"/>
    </location>
</feature>
<organism>
    <name type="scientific">Escherichia coli O81 (strain ED1a)</name>
    <dbReference type="NCBI Taxonomy" id="585397"/>
    <lineage>
        <taxon>Bacteria</taxon>
        <taxon>Pseudomonadati</taxon>
        <taxon>Pseudomonadota</taxon>
        <taxon>Gammaproteobacteria</taxon>
        <taxon>Enterobacterales</taxon>
        <taxon>Enterobacteriaceae</taxon>
        <taxon>Escherichia</taxon>
    </lineage>
</organism>
<dbReference type="EC" id="4.2.1.17" evidence="1"/>
<dbReference type="EC" id="5.1.2.3" evidence="1"/>
<dbReference type="EC" id="5.3.3.8" evidence="1"/>
<dbReference type="EC" id="1.1.1.35" evidence="1"/>
<dbReference type="EMBL" id="CU928162">
    <property type="protein sequence ID" value="CAR10523.1"/>
    <property type="molecule type" value="Genomic_DNA"/>
</dbReference>
<dbReference type="RefSeq" id="WP_000965923.1">
    <property type="nucleotide sequence ID" value="NC_011745.1"/>
</dbReference>
<dbReference type="SMR" id="B7N2F2"/>
<dbReference type="KEGG" id="ecq:ECED1_4548"/>
<dbReference type="HOGENOM" id="CLU_009834_16_3_6"/>
<dbReference type="UniPathway" id="UPA00659"/>
<dbReference type="Proteomes" id="UP000000748">
    <property type="component" value="Chromosome"/>
</dbReference>
<dbReference type="GO" id="GO:0036125">
    <property type="term" value="C:fatty acid beta-oxidation multienzyme complex"/>
    <property type="evidence" value="ECO:0007669"/>
    <property type="project" value="InterPro"/>
</dbReference>
<dbReference type="GO" id="GO:0008692">
    <property type="term" value="F:3-hydroxybutyryl-CoA epimerase activity"/>
    <property type="evidence" value="ECO:0007669"/>
    <property type="project" value="UniProtKB-UniRule"/>
</dbReference>
<dbReference type="GO" id="GO:0004165">
    <property type="term" value="F:delta(3)-delta(2)-enoyl-CoA isomerase activity"/>
    <property type="evidence" value="ECO:0007669"/>
    <property type="project" value="UniProtKB-UniRule"/>
</dbReference>
<dbReference type="GO" id="GO:0004300">
    <property type="term" value="F:enoyl-CoA hydratase activity"/>
    <property type="evidence" value="ECO:0007669"/>
    <property type="project" value="UniProtKB-UniRule"/>
</dbReference>
<dbReference type="GO" id="GO:0016509">
    <property type="term" value="F:long-chain-3-hydroxyacyl-CoA dehydrogenase activity"/>
    <property type="evidence" value="ECO:0007669"/>
    <property type="project" value="TreeGrafter"/>
</dbReference>
<dbReference type="GO" id="GO:0070403">
    <property type="term" value="F:NAD+ binding"/>
    <property type="evidence" value="ECO:0007669"/>
    <property type="project" value="InterPro"/>
</dbReference>
<dbReference type="GO" id="GO:0006635">
    <property type="term" value="P:fatty acid beta-oxidation"/>
    <property type="evidence" value="ECO:0007669"/>
    <property type="project" value="UniProtKB-UniRule"/>
</dbReference>
<dbReference type="CDD" id="cd06558">
    <property type="entry name" value="crotonase-like"/>
    <property type="match status" value="1"/>
</dbReference>
<dbReference type="FunFam" id="1.10.1040.50:FF:000001">
    <property type="entry name" value="Fatty acid oxidation complex subunit alpha"/>
    <property type="match status" value="1"/>
</dbReference>
<dbReference type="FunFam" id="3.90.226.10:FF:000018">
    <property type="entry name" value="Fatty acid oxidation complex subunit alpha"/>
    <property type="match status" value="1"/>
</dbReference>
<dbReference type="FunFam" id="3.40.50.720:FF:000009">
    <property type="entry name" value="Fatty oxidation complex, alpha subunit"/>
    <property type="match status" value="1"/>
</dbReference>
<dbReference type="Gene3D" id="1.10.1040.50">
    <property type="match status" value="1"/>
</dbReference>
<dbReference type="Gene3D" id="3.90.226.10">
    <property type="entry name" value="2-enoyl-CoA Hydratase, Chain A, domain 1"/>
    <property type="match status" value="1"/>
</dbReference>
<dbReference type="Gene3D" id="3.40.50.720">
    <property type="entry name" value="NAD(P)-binding Rossmann-like Domain"/>
    <property type="match status" value="1"/>
</dbReference>
<dbReference type="HAMAP" id="MF_01621">
    <property type="entry name" value="FadB"/>
    <property type="match status" value="1"/>
</dbReference>
<dbReference type="InterPro" id="IPR006180">
    <property type="entry name" value="3-OHacyl-CoA_DH_CS"/>
</dbReference>
<dbReference type="InterPro" id="IPR006176">
    <property type="entry name" value="3-OHacyl-CoA_DH_NAD-bd"/>
</dbReference>
<dbReference type="InterPro" id="IPR006108">
    <property type="entry name" value="3HC_DH_C"/>
</dbReference>
<dbReference type="InterPro" id="IPR008927">
    <property type="entry name" value="6-PGluconate_DH-like_C_sf"/>
</dbReference>
<dbReference type="InterPro" id="IPR029045">
    <property type="entry name" value="ClpP/crotonase-like_dom_sf"/>
</dbReference>
<dbReference type="InterPro" id="IPR018376">
    <property type="entry name" value="Enoyl-CoA_hyd/isom_CS"/>
</dbReference>
<dbReference type="InterPro" id="IPR001753">
    <property type="entry name" value="Enoyl-CoA_hydra/iso"/>
</dbReference>
<dbReference type="InterPro" id="IPR050136">
    <property type="entry name" value="FA_oxidation_alpha_subunit"/>
</dbReference>
<dbReference type="InterPro" id="IPR012799">
    <property type="entry name" value="FadB"/>
</dbReference>
<dbReference type="InterPro" id="IPR036291">
    <property type="entry name" value="NAD(P)-bd_dom_sf"/>
</dbReference>
<dbReference type="NCBIfam" id="TIGR02437">
    <property type="entry name" value="FadB"/>
    <property type="match status" value="1"/>
</dbReference>
<dbReference type="NCBIfam" id="NF008727">
    <property type="entry name" value="PRK11730.1"/>
    <property type="match status" value="1"/>
</dbReference>
<dbReference type="PANTHER" id="PTHR43612">
    <property type="entry name" value="TRIFUNCTIONAL ENZYME SUBUNIT ALPHA"/>
    <property type="match status" value="1"/>
</dbReference>
<dbReference type="PANTHER" id="PTHR43612:SF3">
    <property type="entry name" value="TRIFUNCTIONAL ENZYME SUBUNIT ALPHA, MITOCHONDRIAL"/>
    <property type="match status" value="1"/>
</dbReference>
<dbReference type="Pfam" id="PF00725">
    <property type="entry name" value="3HCDH"/>
    <property type="match status" value="2"/>
</dbReference>
<dbReference type="Pfam" id="PF02737">
    <property type="entry name" value="3HCDH_N"/>
    <property type="match status" value="1"/>
</dbReference>
<dbReference type="Pfam" id="PF00378">
    <property type="entry name" value="ECH_1"/>
    <property type="match status" value="1"/>
</dbReference>
<dbReference type="SUPFAM" id="SSF48179">
    <property type="entry name" value="6-phosphogluconate dehydrogenase C-terminal domain-like"/>
    <property type="match status" value="2"/>
</dbReference>
<dbReference type="SUPFAM" id="SSF52096">
    <property type="entry name" value="ClpP/crotonase"/>
    <property type="match status" value="1"/>
</dbReference>
<dbReference type="SUPFAM" id="SSF51735">
    <property type="entry name" value="NAD(P)-binding Rossmann-fold domains"/>
    <property type="match status" value="1"/>
</dbReference>
<dbReference type="PROSITE" id="PS00067">
    <property type="entry name" value="3HCDH"/>
    <property type="match status" value="1"/>
</dbReference>
<dbReference type="PROSITE" id="PS00166">
    <property type="entry name" value="ENOYL_COA_HYDRATASE"/>
    <property type="match status" value="1"/>
</dbReference>
<protein>
    <recommendedName>
        <fullName evidence="1">Fatty acid oxidation complex subunit alpha</fullName>
    </recommendedName>
    <domain>
        <recommendedName>
            <fullName evidence="1">Enoyl-CoA hydratase/Delta(3)-cis-Delta(2)-trans-enoyl-CoA isomerase/3-hydroxybutyryl-CoA epimerase</fullName>
            <ecNumber evidence="1">4.2.1.17</ecNumber>
            <ecNumber evidence="1">5.1.2.3</ecNumber>
            <ecNumber evidence="1">5.3.3.8</ecNumber>
        </recommendedName>
    </domain>
    <domain>
        <recommendedName>
            <fullName evidence="1">3-hydroxyacyl-CoA dehydrogenase</fullName>
            <ecNumber evidence="1">1.1.1.35</ecNumber>
        </recommendedName>
    </domain>
</protein>
<comment type="function">
    <text evidence="1">Involved in the aerobic and anaerobic degradation of long-chain fatty acids via beta-oxidation cycle. Catalyzes the formation of 3-oxoacyl-CoA from enoyl-CoA via L-3-hydroxyacyl-CoA. It can also use D-3-hydroxyacyl-CoA and cis-3-enoyl-CoA as substrate.</text>
</comment>
<comment type="catalytic activity">
    <reaction evidence="1">
        <text>a (3S)-3-hydroxyacyl-CoA + NAD(+) = a 3-oxoacyl-CoA + NADH + H(+)</text>
        <dbReference type="Rhea" id="RHEA:22432"/>
        <dbReference type="ChEBI" id="CHEBI:15378"/>
        <dbReference type="ChEBI" id="CHEBI:57318"/>
        <dbReference type="ChEBI" id="CHEBI:57540"/>
        <dbReference type="ChEBI" id="CHEBI:57945"/>
        <dbReference type="ChEBI" id="CHEBI:90726"/>
        <dbReference type="EC" id="1.1.1.35"/>
    </reaction>
</comment>
<comment type="catalytic activity">
    <reaction evidence="1">
        <text>a (3S)-3-hydroxyacyl-CoA = a (2E)-enoyl-CoA + H2O</text>
        <dbReference type="Rhea" id="RHEA:16105"/>
        <dbReference type="ChEBI" id="CHEBI:15377"/>
        <dbReference type="ChEBI" id="CHEBI:57318"/>
        <dbReference type="ChEBI" id="CHEBI:58856"/>
        <dbReference type="EC" id="4.2.1.17"/>
    </reaction>
</comment>
<comment type="catalytic activity">
    <reaction evidence="1">
        <text>a 4-saturated-(3S)-3-hydroxyacyl-CoA = a (3E)-enoyl-CoA + H2O</text>
        <dbReference type="Rhea" id="RHEA:20724"/>
        <dbReference type="ChEBI" id="CHEBI:15377"/>
        <dbReference type="ChEBI" id="CHEBI:58521"/>
        <dbReference type="ChEBI" id="CHEBI:137480"/>
        <dbReference type="EC" id="4.2.1.17"/>
    </reaction>
</comment>
<comment type="catalytic activity">
    <reaction evidence="1">
        <text>(3S)-3-hydroxybutanoyl-CoA = (3R)-3-hydroxybutanoyl-CoA</text>
        <dbReference type="Rhea" id="RHEA:21760"/>
        <dbReference type="ChEBI" id="CHEBI:57315"/>
        <dbReference type="ChEBI" id="CHEBI:57316"/>
        <dbReference type="EC" id="5.1.2.3"/>
    </reaction>
</comment>
<comment type="catalytic activity">
    <reaction evidence="1">
        <text>a (3Z)-enoyl-CoA = a 4-saturated (2E)-enoyl-CoA</text>
        <dbReference type="Rhea" id="RHEA:45900"/>
        <dbReference type="ChEBI" id="CHEBI:85097"/>
        <dbReference type="ChEBI" id="CHEBI:85489"/>
        <dbReference type="EC" id="5.3.3.8"/>
    </reaction>
</comment>
<comment type="catalytic activity">
    <reaction evidence="1">
        <text>a (3E)-enoyl-CoA = a 4-saturated (2E)-enoyl-CoA</text>
        <dbReference type="Rhea" id="RHEA:45228"/>
        <dbReference type="ChEBI" id="CHEBI:58521"/>
        <dbReference type="ChEBI" id="CHEBI:85097"/>
        <dbReference type="EC" id="5.3.3.8"/>
    </reaction>
</comment>
<comment type="pathway">
    <text evidence="1">Lipid metabolism; fatty acid beta-oxidation.</text>
</comment>
<comment type="subunit">
    <text evidence="1">Heterotetramer of two alpha chains (FadB) and two beta chains (FadA).</text>
</comment>
<comment type="similarity">
    <text evidence="1">In the N-terminal section; belongs to the enoyl-CoA hydratase/isomerase family.</text>
</comment>
<comment type="similarity">
    <text evidence="1">In the C-terminal section; belongs to the 3-hydroxyacyl-CoA dehydrogenase family.</text>
</comment>
<evidence type="ECO:0000255" key="1">
    <source>
        <dbReference type="HAMAP-Rule" id="MF_01621"/>
    </source>
</evidence>
<evidence type="ECO:0000256" key="2">
    <source>
        <dbReference type="SAM" id="MobiDB-lite"/>
    </source>
</evidence>
<reference key="1">
    <citation type="journal article" date="2009" name="PLoS Genet.">
        <title>Organised genome dynamics in the Escherichia coli species results in highly diverse adaptive paths.</title>
        <authorList>
            <person name="Touchon M."/>
            <person name="Hoede C."/>
            <person name="Tenaillon O."/>
            <person name="Barbe V."/>
            <person name="Baeriswyl S."/>
            <person name="Bidet P."/>
            <person name="Bingen E."/>
            <person name="Bonacorsi S."/>
            <person name="Bouchier C."/>
            <person name="Bouvet O."/>
            <person name="Calteau A."/>
            <person name="Chiapello H."/>
            <person name="Clermont O."/>
            <person name="Cruveiller S."/>
            <person name="Danchin A."/>
            <person name="Diard M."/>
            <person name="Dossat C."/>
            <person name="Karoui M.E."/>
            <person name="Frapy E."/>
            <person name="Garry L."/>
            <person name="Ghigo J.M."/>
            <person name="Gilles A.M."/>
            <person name="Johnson J."/>
            <person name="Le Bouguenec C."/>
            <person name="Lescat M."/>
            <person name="Mangenot S."/>
            <person name="Martinez-Jehanne V."/>
            <person name="Matic I."/>
            <person name="Nassif X."/>
            <person name="Oztas S."/>
            <person name="Petit M.A."/>
            <person name="Pichon C."/>
            <person name="Rouy Z."/>
            <person name="Ruf C.S."/>
            <person name="Schneider D."/>
            <person name="Tourret J."/>
            <person name="Vacherie B."/>
            <person name="Vallenet D."/>
            <person name="Medigue C."/>
            <person name="Rocha E.P.C."/>
            <person name="Denamur E."/>
        </authorList>
    </citation>
    <scope>NUCLEOTIDE SEQUENCE [LARGE SCALE GENOMIC DNA]</scope>
    <source>
        <strain>ED1a</strain>
    </source>
</reference>
<accession>B7N2F2</accession>
<keyword id="KW-0276">Fatty acid metabolism</keyword>
<keyword id="KW-0413">Isomerase</keyword>
<keyword id="KW-0442">Lipid degradation</keyword>
<keyword id="KW-0443">Lipid metabolism</keyword>
<keyword id="KW-0456">Lyase</keyword>
<keyword id="KW-0511">Multifunctional enzyme</keyword>
<keyword id="KW-0520">NAD</keyword>
<keyword id="KW-0560">Oxidoreductase</keyword>
<proteinExistence type="inferred from homology"/>
<name>FADB_ECO81</name>
<sequence>MLYKGDTLYLDWLEDGIAELVFDAPGSVNKLDTATVASLGEAIGVLEQQSDLKGLLLRSNKAAFIVGADITEFLSLFLVPEEQLSQWLHFANSVFNRLEDLPVPTIAAVNGYALGGGCECVLATDYRLATPDLRIGLPETKLGIMPGFGGSVRMPRMLGADSALEIIAAGKDVGADQALKIGLVDGVVKAEKLVEGAIAILRQAINGDLDWKAKRQPKLEPLKLSKIEAAMSFTIAKGMVAQTAGKHYPAPITAVKTIEAAARFGREEALNLENKSFVPLAHTNEARALVGIFLNDQYVKGKAKKLTKDVETPKQAAVLGAGIMGGGIAYQSAWKGVPVVMKDINDKSLTLGMTEAAKLLNKQLERGKIDGLKLAGVISTIHPTLDYAGFDRVDVVVEAVVENPKVKKAVLAETEQKVRPDTVLASNTSTIPISELANALERPENFCGMHFFNPVHRMPLVEIIRGEKSSDETIAKVVAWASKMGKTPIVVNDCPGFFVNRVLFPYFAGFSQLLRDGAGFRKIDKVMEKQFGWPMGPAYLLDVVGIDTAHHAQAVMAAGFPQRMQKDYRDAIDALFDANRFGQKNGLGFWRYKEDSKGKPKKEEDVVVDDLLAKVSQPKRDFSEEEIIARMMIPMVNEVVRCLEEGIIATPAEADMALVYGLGFPPFHGGAFRWLDTLGSAKYLDMAQQYQHLGPLYEVPEGLRNKARHNEPYYPPVEPARPVGDLKTA</sequence>